<comment type="subcellular location">
    <subcellularLocation>
        <location evidence="4">Membrane</location>
        <topology evidence="4">Single-pass type I membrane protein</topology>
    </subcellularLocation>
</comment>
<comment type="similarity">
    <text evidence="4">Belongs to the MHC class II family.</text>
</comment>
<accession>P23150</accession>
<reference key="1">
    <citation type="journal article" date="1991" name="Immunogenetics">
        <title>Nonobese diabetic and nonobese nondiabetic mice have unique MHC class II haplotypes.</title>
        <authorList>
            <person name="Acha-Orbea H."/>
            <person name="Scarpellino L."/>
        </authorList>
    </citation>
    <scope>NUCLEOTIDE SEQUENCE [MRNA]</scope>
    <source>
        <strain>NOD</strain>
        <tissue>Spleen</tissue>
    </source>
</reference>
<reference key="2">
    <citation type="journal article" date="1985" name="J. Biol. Chem.">
        <title>Oligosaccharide microheterogeneity of the murine major histocompatibility antigens. Reproducible site-specific patterns of sialylation and branching in asparagine-linked oligosaccharides.</title>
        <authorList>
            <person name="Swiedler S.J."/>
            <person name="Freed J.H."/>
            <person name="Tarentino A.L."/>
            <person name="Plummer T.H. Jr."/>
            <person name="Hart G.W."/>
        </authorList>
    </citation>
    <scope>GLYCOSYLATION AT ASN-103 AND ASN-143</scope>
</reference>
<reference key="3">
    <citation type="journal article" date="2010" name="Cell">
        <title>A tissue-specific atlas of mouse protein phosphorylation and expression.</title>
        <authorList>
            <person name="Huttlin E.L."/>
            <person name="Jedrychowski M.P."/>
            <person name="Elias J.E."/>
            <person name="Goswami T."/>
            <person name="Rad R."/>
            <person name="Beausoleil S.A."/>
            <person name="Villen J."/>
            <person name="Haas W."/>
            <person name="Sowa M.E."/>
            <person name="Gygi S.P."/>
        </authorList>
    </citation>
    <scope>IDENTIFICATION BY MASS SPECTROMETRY [LARGE SCALE ANALYSIS]</scope>
    <source>
        <tissue>Heart</tissue>
        <tissue>Kidney</tissue>
        <tissue>Lung</tissue>
        <tissue>Spleen</tissue>
    </source>
</reference>
<evidence type="ECO:0000255" key="1"/>
<evidence type="ECO:0000255" key="2">
    <source>
        <dbReference type="PROSITE-ProRule" id="PRU00114"/>
    </source>
</evidence>
<evidence type="ECO:0000269" key="3">
    <source>
    </source>
</evidence>
<evidence type="ECO:0000305" key="4"/>
<protein>
    <recommendedName>
        <fullName>H-2 class II histocompatibility antigen, I-E alpha chain</fullName>
    </recommendedName>
</protein>
<keyword id="KW-1064">Adaptive immunity</keyword>
<keyword id="KW-1015">Disulfide bond</keyword>
<keyword id="KW-0325">Glycoprotein</keyword>
<keyword id="KW-0391">Immunity</keyword>
<keyword id="KW-0472">Membrane</keyword>
<keyword id="KW-0491">MHC II</keyword>
<keyword id="KW-1185">Reference proteome</keyword>
<keyword id="KW-0732">Signal</keyword>
<keyword id="KW-0812">Transmembrane</keyword>
<keyword id="KW-1133">Transmembrane helix</keyword>
<proteinExistence type="evidence at protein level"/>
<organism>
    <name type="scientific">Mus musculus</name>
    <name type="common">Mouse</name>
    <dbReference type="NCBI Taxonomy" id="10090"/>
    <lineage>
        <taxon>Eukaryota</taxon>
        <taxon>Metazoa</taxon>
        <taxon>Chordata</taxon>
        <taxon>Craniata</taxon>
        <taxon>Vertebrata</taxon>
        <taxon>Euteleostomi</taxon>
        <taxon>Mammalia</taxon>
        <taxon>Eutheria</taxon>
        <taxon>Euarchontoglires</taxon>
        <taxon>Glires</taxon>
        <taxon>Rodentia</taxon>
        <taxon>Myomorpha</taxon>
        <taxon>Muroidea</taxon>
        <taxon>Muridae</taxon>
        <taxon>Murinae</taxon>
        <taxon>Mus</taxon>
        <taxon>Mus</taxon>
    </lineage>
</organism>
<sequence length="254" mass="28013">RSRALILGVLALTTMLSLCGGEDDIEADHVAFYGISVYQSPGDIGQYTFEFDGDELFYVDLDKKETVWMLPEFGQLTSFDPQGGLQEIATGKYNLEILIKDSNFTPAANEAPQATVFPKSPVLLGQPNTLICFVDNIFPPVINITWLRNSKSVTDGVYETSFLVNRDHSFHKLSYLTFIPSDDDIYDCKVEHWGLEEPVLKHWEPEIPAPMSELTETVVCALGLSVGLVGIVVGTIFIIQGLRSGGTSRHPGPL</sequence>
<name>HA2J_MOUSE</name>
<dbReference type="EMBL" id="X52643">
    <property type="protein sequence ID" value="CAA36865.1"/>
    <property type="molecule type" value="mRNA"/>
</dbReference>
<dbReference type="PIR" id="I48421">
    <property type="entry name" value="S11649"/>
</dbReference>
<dbReference type="SMR" id="P23150"/>
<dbReference type="IntAct" id="P23150">
    <property type="interactions" value="1"/>
</dbReference>
<dbReference type="iPTMnet" id="P23150"/>
<dbReference type="jPOST" id="P23150"/>
<dbReference type="AGR" id="MGI:95895"/>
<dbReference type="MGI" id="MGI:95895">
    <property type="gene designation" value="H2-Aa"/>
</dbReference>
<dbReference type="Proteomes" id="UP000000589">
    <property type="component" value="Unplaced"/>
</dbReference>
<dbReference type="GO" id="GO:0009897">
    <property type="term" value="C:external side of plasma membrane"/>
    <property type="evidence" value="ECO:0000314"/>
    <property type="project" value="MGI"/>
</dbReference>
<dbReference type="GO" id="GO:0005764">
    <property type="term" value="C:lysosome"/>
    <property type="evidence" value="ECO:0000314"/>
    <property type="project" value="MGI"/>
</dbReference>
<dbReference type="GO" id="GO:0042613">
    <property type="term" value="C:MHC class II protein complex"/>
    <property type="evidence" value="ECO:0000314"/>
    <property type="project" value="MGI"/>
</dbReference>
<dbReference type="GO" id="GO:0005886">
    <property type="term" value="C:plasma membrane"/>
    <property type="evidence" value="ECO:0000314"/>
    <property type="project" value="MGI"/>
</dbReference>
<dbReference type="GO" id="GO:0042605">
    <property type="term" value="F:peptide antigen binding"/>
    <property type="evidence" value="ECO:0000314"/>
    <property type="project" value="MGI"/>
</dbReference>
<dbReference type="GO" id="GO:0002250">
    <property type="term" value="P:adaptive immune response"/>
    <property type="evidence" value="ECO:0007669"/>
    <property type="project" value="UniProtKB-KW"/>
</dbReference>
<dbReference type="GO" id="GO:0019882">
    <property type="term" value="P:antigen processing and presentation"/>
    <property type="evidence" value="ECO:0000314"/>
    <property type="project" value="MGI"/>
</dbReference>
<dbReference type="GO" id="GO:0019886">
    <property type="term" value="P:antigen processing and presentation of exogenous peptide antigen via MHC class II"/>
    <property type="evidence" value="ECO:0000314"/>
    <property type="project" value="MGI"/>
</dbReference>
<dbReference type="GO" id="GO:0048002">
    <property type="term" value="P:antigen processing and presentation of peptide antigen"/>
    <property type="evidence" value="ECO:0000314"/>
    <property type="project" value="MGI"/>
</dbReference>
<dbReference type="GO" id="GO:0045582">
    <property type="term" value="P:positive regulation of T cell differentiation"/>
    <property type="evidence" value="ECO:0000314"/>
    <property type="project" value="MGI"/>
</dbReference>
<dbReference type="CDD" id="cd21006">
    <property type="entry name" value="IgC1_MHC_II_alpha_I-A"/>
    <property type="match status" value="1"/>
</dbReference>
<dbReference type="FunFam" id="2.60.40.10:FF:000280">
    <property type="entry name" value="HLA class II histocompatibility antigen, DR alpha chain"/>
    <property type="match status" value="1"/>
</dbReference>
<dbReference type="FunFam" id="3.10.320.10:FF:000002">
    <property type="entry name" value="HLA class II histocompatibility antigen, DR alpha chain"/>
    <property type="match status" value="1"/>
</dbReference>
<dbReference type="Gene3D" id="3.10.320.10">
    <property type="entry name" value="Class II Histocompatibility Antigen, M Beta Chain, Chain B, domain 1"/>
    <property type="match status" value="1"/>
</dbReference>
<dbReference type="Gene3D" id="2.60.40.10">
    <property type="entry name" value="Immunoglobulins"/>
    <property type="match status" value="1"/>
</dbReference>
<dbReference type="InterPro" id="IPR007110">
    <property type="entry name" value="Ig-like_dom"/>
</dbReference>
<dbReference type="InterPro" id="IPR036179">
    <property type="entry name" value="Ig-like_dom_sf"/>
</dbReference>
<dbReference type="InterPro" id="IPR013783">
    <property type="entry name" value="Ig-like_fold"/>
</dbReference>
<dbReference type="InterPro" id="IPR003006">
    <property type="entry name" value="Ig/MHC_CS"/>
</dbReference>
<dbReference type="InterPro" id="IPR003597">
    <property type="entry name" value="Ig_C1-set"/>
</dbReference>
<dbReference type="InterPro" id="IPR050160">
    <property type="entry name" value="MHC/Immunoglobulin"/>
</dbReference>
<dbReference type="InterPro" id="IPR011162">
    <property type="entry name" value="MHC_I/II-like_Ag-recog"/>
</dbReference>
<dbReference type="InterPro" id="IPR014745">
    <property type="entry name" value="MHC_II_a/b_N"/>
</dbReference>
<dbReference type="InterPro" id="IPR001003">
    <property type="entry name" value="MHC_II_a_N"/>
</dbReference>
<dbReference type="PANTHER" id="PTHR19944:SF59">
    <property type="entry name" value="HLA CLASS II HISTOCOMPATIBILITY ANTIGEN, DQ ALPHA 1 CHAIN"/>
    <property type="match status" value="1"/>
</dbReference>
<dbReference type="PANTHER" id="PTHR19944">
    <property type="entry name" value="MHC CLASS II-RELATED"/>
    <property type="match status" value="1"/>
</dbReference>
<dbReference type="Pfam" id="PF07654">
    <property type="entry name" value="C1-set"/>
    <property type="match status" value="1"/>
</dbReference>
<dbReference type="Pfam" id="PF00993">
    <property type="entry name" value="MHC_II_alpha"/>
    <property type="match status" value="1"/>
</dbReference>
<dbReference type="SMART" id="SM00407">
    <property type="entry name" value="IGc1"/>
    <property type="match status" value="1"/>
</dbReference>
<dbReference type="SMART" id="SM00920">
    <property type="entry name" value="MHC_II_alpha"/>
    <property type="match status" value="1"/>
</dbReference>
<dbReference type="SUPFAM" id="SSF48726">
    <property type="entry name" value="Immunoglobulin"/>
    <property type="match status" value="1"/>
</dbReference>
<dbReference type="SUPFAM" id="SSF54452">
    <property type="entry name" value="MHC antigen-recognition domain"/>
    <property type="match status" value="1"/>
</dbReference>
<dbReference type="PROSITE" id="PS50835">
    <property type="entry name" value="IG_LIKE"/>
    <property type="match status" value="1"/>
</dbReference>
<dbReference type="PROSITE" id="PS00290">
    <property type="entry name" value="IG_MHC"/>
    <property type="match status" value="1"/>
</dbReference>
<feature type="signal peptide">
    <location>
        <begin position="1" status="less than"/>
        <end position="24"/>
    </location>
</feature>
<feature type="chain" id="PRO_0000018980" description="H-2 class II histocompatibility antigen, I-E alpha chain">
    <location>
        <begin position="25"/>
        <end position="254"/>
    </location>
</feature>
<feature type="topological domain" description="Extracellular" evidence="1">
    <location>
        <begin position="25"/>
        <end position="216"/>
    </location>
</feature>
<feature type="transmembrane region" description="Helical" evidence="1">
    <location>
        <begin position="217"/>
        <end position="242"/>
    </location>
</feature>
<feature type="topological domain" description="Cytoplasmic" evidence="1">
    <location>
        <begin position="243"/>
        <end position="254"/>
    </location>
</feature>
<feature type="domain" description="Ig-like C1-type">
    <location>
        <begin position="112"/>
        <end position="204"/>
    </location>
</feature>
<feature type="region of interest" description="Alpha-1">
    <location>
        <begin position="25"/>
        <end position="109"/>
    </location>
</feature>
<feature type="region of interest" description="Alpha-2">
    <location>
        <begin position="110"/>
        <end position="203"/>
    </location>
</feature>
<feature type="region of interest" description="Connecting peptide">
    <location>
        <begin position="204"/>
        <end position="216"/>
    </location>
</feature>
<feature type="glycosylation site" description="N-linked (GlcNAc...) asparagine" evidence="3">
    <location>
        <position position="103"/>
    </location>
</feature>
<feature type="glycosylation site" description="N-linked (GlcNAc...) asparagine" evidence="3">
    <location>
        <position position="143"/>
    </location>
</feature>
<feature type="disulfide bond" evidence="2">
    <location>
        <begin position="132"/>
        <end position="188"/>
    </location>
</feature>
<feature type="non-terminal residue">
    <location>
        <position position="1"/>
    </location>
</feature>